<name>GP7_BPSPP</name>
<comment type="function">
    <text evidence="3">Binds the viral DNA inside the capsid and the portal protein. May control the DNA exit from the virion.</text>
</comment>
<comment type="subunit">
    <text evidence="1 2">Monomer (PubMed:12940981). Interacts with the portal protein gp6; this interaction targets gp7 to the procapsid portal vertex.</text>
</comment>
<comment type="subcellular location">
    <subcellularLocation>
        <location evidence="1 4">Virion</location>
    </subcellularLocation>
    <text evidence="6">Probably located next to the portal vertex. Present in one to two copies per virion.</text>
</comment>
<feature type="chain" id="PRO_0000077793" description="Minor head protein GP7">
    <location>
        <begin position="1"/>
        <end position="308"/>
    </location>
</feature>
<protein>
    <recommendedName>
        <fullName>Minor head protein GP7</fullName>
    </recommendedName>
    <alternativeName>
        <fullName evidence="5">Accessory head protein gp7</fullName>
    </alternativeName>
</protein>
<organism>
    <name type="scientific">Bacillus phage SPP1</name>
    <name type="common">Bacteriophage SPP1</name>
    <dbReference type="NCBI Taxonomy" id="10724"/>
    <lineage>
        <taxon>Viruses</taxon>
        <taxon>Duplodnaviria</taxon>
        <taxon>Heunggongvirae</taxon>
        <taxon>Uroviricota</taxon>
        <taxon>Caudoviricetes</taxon>
    </lineage>
</organism>
<gene>
    <name type="primary">7</name>
</gene>
<keyword id="KW-0167">Capsid protein</keyword>
<keyword id="KW-0238">DNA-binding</keyword>
<keyword id="KW-0426">Late protein</keyword>
<keyword id="KW-1185">Reference proteome</keyword>
<keyword id="KW-0946">Virion</keyword>
<sequence>MPEPQNQEELDKYLDNIITQAEKRLDKVFASRLKEIKAMINKLFEKYSKNGELTYADVVKYNRLEKEMDVIKQNISADYKTVLKMLNELLETQYVDNYLRSAYIYEMYTGRNLGFSVPSADVVQRAVENPIPLLTLPKVLERQRVELINNIAMAIAQGLMAGEGYSQVAQRVHKRMQLSLAKARLTARTEGHRVQVAGRMASAEQAAKKVNMQKMWSAALDTRTRAGHRKLDGKIINMDENFKSIYGGVGKAPGHMHMAKDDCNCRCALIYVIDGEIPSVRRARLSDGSTRVIKYIPYTEWEKQKKAS</sequence>
<evidence type="ECO:0000269" key="1">
    <source>
    </source>
</evidence>
<evidence type="ECO:0000269" key="2">
    <source>
    </source>
</evidence>
<evidence type="ECO:0000269" key="3">
    <source>
    </source>
</evidence>
<evidence type="ECO:0000269" key="4">
    <source>
    </source>
</evidence>
<evidence type="ECO:0000303" key="5">
    <source>
    </source>
</evidence>
<evidence type="ECO:0000305" key="6">
    <source>
    </source>
</evidence>
<proteinExistence type="evidence at protein level"/>
<accession>Q38442</accession>
<accession>Q38577</accession>
<reference key="1">
    <citation type="journal article" date="1997" name="J. Mol. Biol.">
        <title>Head morphogenesis genes of the Bacillus subtilis bacteriophage SPP1.</title>
        <authorList>
            <person name="Becker B."/>
            <person name="de la Fuente N."/>
            <person name="Gassel M."/>
            <person name="Guenther D."/>
            <person name="Tavares P."/>
            <person name="Lurz R."/>
            <person name="Trautner T.A."/>
            <person name="Alonso J.C."/>
        </authorList>
    </citation>
    <scope>NUCLEOTIDE SEQUENCE [GENOMIC DNA]</scope>
    <scope>SUBCELLULAR LOCATION</scope>
</reference>
<reference key="2">
    <citation type="journal article" date="1997" name="Gene">
        <title>The complete nucleotide sequence and functional organization of Bacillus subtilis bacteriophage SPP1.</title>
        <authorList>
            <person name="Alonso J.C."/>
            <person name="Luder G."/>
            <person name="Stiege A.C."/>
            <person name="Chai S."/>
            <person name="Weise F."/>
            <person name="Trautner T.A."/>
        </authorList>
    </citation>
    <scope>NUCLEOTIDE SEQUENCE [LARGE SCALE GENOMIC DNA]</scope>
</reference>
<reference key="3">
    <citation type="journal article" date="1992" name="J. Mol. Biol.">
        <title>Identification of a gene in Bacillus subtilis bacteriophage SPP1 determining the amount of packaged DNA.</title>
        <authorList>
            <person name="Tavares P."/>
            <person name="Santos M.A."/>
            <person name="Lurz R."/>
            <person name="Morelli G."/>
            <person name="de Lencastre H."/>
            <person name="Trautner T.A."/>
        </authorList>
    </citation>
    <scope>NUCLEOTIDE SEQUENCE [GENOMIC DNA] OF 1-43</scope>
</reference>
<reference key="4">
    <citation type="journal article" date="2000" name="J. Mol. Biol.">
        <title>Shape and DNA packaging activity of bacteriophage SPP1 procapsid: protein components and interactions during assembly.</title>
        <authorList>
            <person name="Droege A."/>
            <person name="Santos M.A."/>
            <person name="Stiege A.C."/>
            <person name="Alonso J.C."/>
            <person name="Lurz R."/>
            <person name="Trautner T.A."/>
            <person name="Tavares P."/>
        </authorList>
    </citation>
    <scope>INTERACTION WITH THE PORTAL PROTEIN</scope>
</reference>
<reference key="5">
    <citation type="journal article" date="2003" name="Mol. Microbiol.">
        <title>Specific targeting of a DNA-binding protein to the SPP1 procapsid by interaction with the portal oligomer.</title>
        <authorList>
            <person name="Stiege A.C."/>
            <person name="Isidro A."/>
            <person name="Droege A."/>
            <person name="Tavares P."/>
        </authorList>
    </citation>
    <scope>DNA-BINDING</scope>
    <scope>INTERACTION WITH THE PORTAL PROTEIN</scope>
    <scope>SUBUNIT</scope>
</reference>
<reference key="6">
    <citation type="journal article" date="2006" name="Mol. Microbiol.">
        <title>The minor capsid protein gp7 of bacteriophage SPP1 is required for efficient infection of Bacillus subtilis.</title>
        <authorList>
            <person name="Vinga I."/>
            <person name="Droege A."/>
            <person name="Stiege A.C."/>
            <person name="Lurz R."/>
            <person name="Santos M.A."/>
            <person name="Daugelavicius R."/>
            <person name="Tavares P."/>
        </authorList>
    </citation>
    <scope>FUNCTION</scope>
</reference>
<organismHost>
    <name type="scientific">Bacillus subtilis</name>
    <dbReference type="NCBI Taxonomy" id="1423"/>
</organismHost>
<dbReference type="EMBL" id="X89721">
    <property type="protein sequence ID" value="CAA61865.1"/>
    <property type="molecule type" value="Genomic_DNA"/>
</dbReference>
<dbReference type="EMBL" id="X97918">
    <property type="protein sequence ID" value="CAA66581.1"/>
    <property type="molecule type" value="Genomic_DNA"/>
</dbReference>
<dbReference type="EMBL" id="X56064">
    <property type="protein sequence ID" value="CAA39542.1"/>
    <property type="molecule type" value="Genomic_DNA"/>
</dbReference>
<dbReference type="PIR" id="S58137">
    <property type="entry name" value="S58137"/>
</dbReference>
<dbReference type="RefSeq" id="NP_690662.1">
    <property type="nucleotide sequence ID" value="NC_004166.2"/>
</dbReference>
<dbReference type="SMR" id="Q38442"/>
<dbReference type="TCDB" id="1.W.2.1.11">
    <property type="family name" value="the phage portal protein 2 (ppp2) family"/>
</dbReference>
<dbReference type="KEGG" id="vg:955280"/>
<dbReference type="OrthoDB" id="4788at10239"/>
<dbReference type="Proteomes" id="UP000002559">
    <property type="component" value="Genome"/>
</dbReference>
<dbReference type="GO" id="GO:0019028">
    <property type="term" value="C:viral capsid"/>
    <property type="evidence" value="ECO:0000314"/>
    <property type="project" value="UniProtKB"/>
</dbReference>
<dbReference type="GO" id="GO:0046729">
    <property type="term" value="C:viral procapsid"/>
    <property type="evidence" value="ECO:0000314"/>
    <property type="project" value="CACAO"/>
</dbReference>
<dbReference type="GO" id="GO:0003677">
    <property type="term" value="F:DNA binding"/>
    <property type="evidence" value="ECO:0007669"/>
    <property type="project" value="UniProtKB-KW"/>
</dbReference>
<dbReference type="InterPro" id="IPR006528">
    <property type="entry name" value="Phage_head_morphogenesis_dom"/>
</dbReference>
<dbReference type="Pfam" id="PF04233">
    <property type="entry name" value="Phage_Mu_F"/>
    <property type="match status" value="1"/>
</dbReference>